<accession>O88867</accession>
<sequence>MASSDTEGKRVVVIGGGLVGALNACFLAKRNFQVDVYEAREDIRVANFMRGRSINLALSYRGRQALKAVGLEDQIVSKGVPMKARMIHSLSGKKSAIPYGNKSQYILSISREKLNKDLLTAVESYPNAKVHFGHKLSKCCPEEGILTMLGPNKVPRDITCDLIVGCDGAYSTVRAHLMKKPRFDYSQQYIPHGYMELTIPPKNGEYAMEPNCLHIWPRNAFMMIALPNMDKSFTCTLFMSFEEFEKLPTHSDVLDFFQKNFPDAIPLMGEQALMRDFFLLPAQPMISVKCSPFHLKSRCVLMGDAAHAIVPFFGQGMNAGFEDCLVFDELMDKFNNDLSVCLPEFSRFRIPDDHAISDLSMYNYIEMRAHVNSRWFLFQRLLDKFLHALMPSTFIPLYTMVAFTRIRYHEAVLRWHWQKKVINRGLFVLGSLVAIGSAYILVHHLSPRPLELLRSAWTGTSGHWNRSADISPRVPWSH</sequence>
<proteinExistence type="evidence at protein level"/>
<gene>
    <name evidence="9" type="primary">Kmo</name>
</gene>
<organism>
    <name type="scientific">Rattus norvegicus</name>
    <name type="common">Rat</name>
    <dbReference type="NCBI Taxonomy" id="10116"/>
    <lineage>
        <taxon>Eukaryota</taxon>
        <taxon>Metazoa</taxon>
        <taxon>Chordata</taxon>
        <taxon>Craniata</taxon>
        <taxon>Vertebrata</taxon>
        <taxon>Euteleostomi</taxon>
        <taxon>Mammalia</taxon>
        <taxon>Eutheria</taxon>
        <taxon>Euarchontoglires</taxon>
        <taxon>Glires</taxon>
        <taxon>Rodentia</taxon>
        <taxon>Myomorpha</taxon>
        <taxon>Muroidea</taxon>
        <taxon>Muridae</taxon>
        <taxon>Murinae</taxon>
        <taxon>Rattus</taxon>
    </lineage>
</organism>
<reference evidence="7 8" key="1">
    <citation type="submission" date="1998-03" db="EMBL/GenBank/DDBJ databases">
        <authorList>
            <person name="Magagnin S."/>
            <person name="Covini N."/>
            <person name="Cini M."/>
            <person name="Bormetti R."/>
            <person name="Molinari A."/>
            <person name="Speciale C."/>
            <person name="Post C."/>
            <person name="Benatti L."/>
        </authorList>
    </citation>
    <scope>NUCLEOTIDE SEQUENCE [MRNA]</scope>
</reference>
<reference key="2">
    <citation type="journal article" date="2004" name="Genome Res.">
        <title>The status, quality, and expansion of the NIH full-length cDNA project: the Mammalian Gene Collection (MGC).</title>
        <authorList>
            <consortium name="The MGC Project Team"/>
        </authorList>
    </citation>
    <scope>NUCLEOTIDE SEQUENCE [LARGE SCALE MRNA]</scope>
    <source>
        <tissue>Liver</tissue>
    </source>
</reference>
<reference evidence="7" key="3">
    <citation type="journal article" date="1992" name="Anal. Biochem.">
        <title>A radiometric assay for kynurenine 3-hydroxylase based on the release of 3H2O during hydroxylation of L-[3,5-3H]kynurenine.</title>
        <authorList>
            <person name="Erickson J.B."/>
            <person name="Flanagan E.M."/>
            <person name="Russo S."/>
            <person name="Reinhard J.F. Jr."/>
        </authorList>
    </citation>
    <scope>CATALYTIC ACTIVITY</scope>
    <scope>BIOPHYSICOCHEMICAL PROPERTIES</scope>
    <scope>SUBCELLULAR LOCATION</scope>
    <scope>TISSUE SPECIFICITY</scope>
</reference>
<reference key="4">
    <citation type="journal article" date="2002" name="Nat. Rev. Drug Discov.">
        <title>Endogenous kynurenines as targets for drug discovery and development.</title>
        <authorList>
            <person name="Stone T.W."/>
            <person name="Darlington L.G."/>
        </authorList>
    </citation>
    <scope>REVIEW</scope>
</reference>
<reference key="5">
    <citation type="journal article" date="2016" name="Nat. Med.">
        <title>Kynurenine-3-monooxygenase inhibition prevents multiple organ failure in rodent models of acute pancreatitis.</title>
        <authorList>
            <person name="Mole D.J."/>
            <person name="Webster S.P."/>
            <person name="Uings I."/>
            <person name="Zheng X."/>
            <person name="Binnie M."/>
            <person name="Wilson K."/>
            <person name="Hutchinson J.P."/>
            <person name="Mirguet O."/>
            <person name="Walker A."/>
            <person name="Beaufils B."/>
            <person name="Ancellin N."/>
            <person name="Trottet L."/>
            <person name="Beneton V."/>
            <person name="Mowat C.G."/>
            <person name="Wilkinson M."/>
            <person name="Rowland P."/>
            <person name="Haslam C."/>
            <person name="McBride A."/>
            <person name="Homer N.Z."/>
            <person name="Baily J.E."/>
            <person name="Sharp M.G."/>
            <person name="Garden O.J."/>
            <person name="Hughes J."/>
            <person name="Howie S.E."/>
            <person name="Holmes D.S."/>
            <person name="Liddle J."/>
            <person name="Iredale J.P."/>
        </authorList>
    </citation>
    <scope>FUNCTION</scope>
    <scope>BIOPHYSICOCHEMICAL PROPERTIES</scope>
</reference>
<reference key="6">
    <citation type="journal article" date="2017" name="J. Med. Chem.">
        <title>Development of a Series of Kynurenine 3-Monooxygenase Inhibitors Leading to a Clinical Candidate for the Treatment of Acute Pancreatitis.</title>
        <authorList>
            <person name="Walker A.L."/>
            <person name="Ancellin N."/>
            <person name="Beaufils B."/>
            <person name="Bergeal M."/>
            <person name="Binnie M."/>
            <person name="Bouillot A."/>
            <person name="Clapham D."/>
            <person name="Denis A."/>
            <person name="Haslam C.P."/>
            <person name="Holmes D.S."/>
            <person name="Hutchinson J.P."/>
            <person name="Liddle J."/>
            <person name="McBride A."/>
            <person name="Mirguet O."/>
            <person name="Mowat C.G."/>
            <person name="Rowland P."/>
            <person name="Tiberghien N."/>
            <person name="Trottet L."/>
            <person name="Uings I."/>
            <person name="Webster S.P."/>
            <person name="Zheng X."/>
            <person name="Mole D.J."/>
        </authorList>
    </citation>
    <scope>FUNCTION</scope>
</reference>
<dbReference type="EC" id="1.14.13.9" evidence="3"/>
<dbReference type="EMBL" id="AF056031">
    <property type="protein sequence ID" value="AAC62614.1"/>
    <property type="molecule type" value="mRNA"/>
</dbReference>
<dbReference type="EMBL" id="BC088142">
    <property type="protein sequence ID" value="AAH88142.1"/>
    <property type="molecule type" value="mRNA"/>
</dbReference>
<dbReference type="RefSeq" id="NP_067604.1">
    <property type="nucleotide sequence ID" value="NM_021593.2"/>
</dbReference>
<dbReference type="PDB" id="6LKD">
    <property type="method" value="X-ray"/>
    <property type="resolution" value="3.00 A"/>
    <property type="chains" value="A/B=1-478"/>
</dbReference>
<dbReference type="PDB" id="6LKE">
    <property type="method" value="X-ray"/>
    <property type="resolution" value="3.00 A"/>
    <property type="chains" value="A/B=1-478"/>
</dbReference>
<dbReference type="PDBsum" id="6LKD"/>
<dbReference type="PDBsum" id="6LKE"/>
<dbReference type="SMR" id="O88867"/>
<dbReference type="FunCoup" id="O88867">
    <property type="interactions" value="284"/>
</dbReference>
<dbReference type="STRING" id="10116.ENSRNOP00000005005"/>
<dbReference type="BindingDB" id="O88867"/>
<dbReference type="ChEMBL" id="CHEMBL3457"/>
<dbReference type="iPTMnet" id="O88867"/>
<dbReference type="PhosphoSitePlus" id="O88867"/>
<dbReference type="PaxDb" id="10116-ENSRNOP00000005005"/>
<dbReference type="Ensembl" id="ENSRNOT00000005005.7">
    <property type="protein sequence ID" value="ENSRNOP00000005005.3"/>
    <property type="gene ID" value="ENSRNOG00000003709.7"/>
</dbReference>
<dbReference type="GeneID" id="59113"/>
<dbReference type="KEGG" id="rno:59113"/>
<dbReference type="UCSC" id="RGD:620610">
    <property type="organism name" value="rat"/>
</dbReference>
<dbReference type="AGR" id="RGD:620610"/>
<dbReference type="CTD" id="8564"/>
<dbReference type="RGD" id="620610">
    <property type="gene designation" value="Kmo"/>
</dbReference>
<dbReference type="eggNOG" id="KOG2614">
    <property type="taxonomic scope" value="Eukaryota"/>
</dbReference>
<dbReference type="GeneTree" id="ENSGT00390000000747"/>
<dbReference type="HOGENOM" id="CLU_023210_0_1_1"/>
<dbReference type="InParanoid" id="O88867"/>
<dbReference type="OMA" id="REFMFIA"/>
<dbReference type="PhylomeDB" id="O88867"/>
<dbReference type="TreeFam" id="TF312990"/>
<dbReference type="BRENDA" id="1.14.13.9">
    <property type="organism ID" value="5301"/>
</dbReference>
<dbReference type="Reactome" id="R-RNO-71240">
    <property type="pathway name" value="Tryptophan catabolism"/>
</dbReference>
<dbReference type="SABIO-RK" id="O88867"/>
<dbReference type="UniPathway" id="UPA00253">
    <property type="reaction ID" value="UER00328"/>
</dbReference>
<dbReference type="PRO" id="PR:O88867"/>
<dbReference type="Proteomes" id="UP000002494">
    <property type="component" value="Chromosome 13"/>
</dbReference>
<dbReference type="Bgee" id="ENSRNOG00000003709">
    <property type="expression patterns" value="Expressed in adult mammalian kidney and 12 other cell types or tissues"/>
</dbReference>
<dbReference type="GO" id="GO:0005615">
    <property type="term" value="C:extracellular space"/>
    <property type="evidence" value="ECO:0000314"/>
    <property type="project" value="RGD"/>
</dbReference>
<dbReference type="GO" id="GO:0005741">
    <property type="term" value="C:mitochondrial outer membrane"/>
    <property type="evidence" value="ECO:0000314"/>
    <property type="project" value="UniProtKB"/>
</dbReference>
<dbReference type="GO" id="GO:0071949">
    <property type="term" value="F:FAD binding"/>
    <property type="evidence" value="ECO:0000250"/>
    <property type="project" value="UniProtKB"/>
</dbReference>
<dbReference type="GO" id="GO:0050660">
    <property type="term" value="F:flavin adenine dinucleotide binding"/>
    <property type="evidence" value="ECO:0000266"/>
    <property type="project" value="RGD"/>
</dbReference>
<dbReference type="GO" id="GO:0004502">
    <property type="term" value="F:kynurenine 3-monooxygenase activity"/>
    <property type="evidence" value="ECO:0000314"/>
    <property type="project" value="UniProtKB"/>
</dbReference>
<dbReference type="GO" id="GO:0016174">
    <property type="term" value="F:NAD(P)H oxidase H2O2-forming activity"/>
    <property type="evidence" value="ECO:0000250"/>
    <property type="project" value="UniProtKB"/>
</dbReference>
<dbReference type="GO" id="GO:0034354">
    <property type="term" value="P:'de novo' NAD biosynthetic process from L-tryptophan"/>
    <property type="evidence" value="ECO:0007669"/>
    <property type="project" value="UniProtKB-UniRule"/>
</dbReference>
<dbReference type="GO" id="GO:0043420">
    <property type="term" value="P:anthranilate metabolic process"/>
    <property type="evidence" value="ECO:0007669"/>
    <property type="project" value="UniProtKB-UniRule"/>
</dbReference>
<dbReference type="GO" id="GO:0071347">
    <property type="term" value="P:cellular response to interleukin-1"/>
    <property type="evidence" value="ECO:0000270"/>
    <property type="project" value="RGD"/>
</dbReference>
<dbReference type="GO" id="GO:0071222">
    <property type="term" value="P:cellular response to lipopolysaccharide"/>
    <property type="evidence" value="ECO:0000270"/>
    <property type="project" value="RGD"/>
</dbReference>
<dbReference type="GO" id="GO:0034276">
    <property type="term" value="P:kynurenic acid biosynthetic process"/>
    <property type="evidence" value="ECO:0000315"/>
    <property type="project" value="RGD"/>
</dbReference>
<dbReference type="GO" id="GO:0070189">
    <property type="term" value="P:kynurenine metabolic process"/>
    <property type="evidence" value="ECO:0000314"/>
    <property type="project" value="UniProtKB"/>
</dbReference>
<dbReference type="GO" id="GO:0097052">
    <property type="term" value="P:L-kynurenine metabolic process"/>
    <property type="evidence" value="ECO:0000314"/>
    <property type="project" value="RGD"/>
</dbReference>
<dbReference type="GO" id="GO:0006569">
    <property type="term" value="P:L-tryptophan catabolic process"/>
    <property type="evidence" value="ECO:0007669"/>
    <property type="project" value="UniProtKB-UniRule"/>
</dbReference>
<dbReference type="GO" id="GO:0019674">
    <property type="term" value="P:NAD metabolic process"/>
    <property type="evidence" value="ECO:0000314"/>
    <property type="project" value="UniProtKB"/>
</dbReference>
<dbReference type="GO" id="GO:0014049">
    <property type="term" value="P:positive regulation of glutamate secretion"/>
    <property type="evidence" value="ECO:0000315"/>
    <property type="project" value="RGD"/>
</dbReference>
<dbReference type="GO" id="GO:1903296">
    <property type="term" value="P:positive regulation of glutamate secretion, neurotransmission"/>
    <property type="evidence" value="ECO:0000315"/>
    <property type="project" value="RGD"/>
</dbReference>
<dbReference type="GO" id="GO:0019805">
    <property type="term" value="P:quinolinate biosynthetic process"/>
    <property type="evidence" value="ECO:0007669"/>
    <property type="project" value="UniProtKB-UniRule"/>
</dbReference>
<dbReference type="GO" id="GO:0032496">
    <property type="term" value="P:response to lipopolysaccharide"/>
    <property type="evidence" value="ECO:0000270"/>
    <property type="project" value="RGD"/>
</dbReference>
<dbReference type="GO" id="GO:0009651">
    <property type="term" value="P:response to salt stress"/>
    <property type="evidence" value="ECO:0000266"/>
    <property type="project" value="RGD"/>
</dbReference>
<dbReference type="FunFam" id="3.50.50.60:FF:000105">
    <property type="entry name" value="Kynurenine 3-monooxygenase"/>
    <property type="match status" value="1"/>
</dbReference>
<dbReference type="Gene3D" id="3.50.50.60">
    <property type="entry name" value="FAD/NAD(P)-binding domain"/>
    <property type="match status" value="1"/>
</dbReference>
<dbReference type="HAMAP" id="MF_01971">
    <property type="entry name" value="Kynurenine_monooxygenase"/>
    <property type="match status" value="1"/>
</dbReference>
<dbReference type="InterPro" id="IPR002938">
    <property type="entry name" value="FAD-bd"/>
</dbReference>
<dbReference type="InterPro" id="IPR036188">
    <property type="entry name" value="FAD/NAD-bd_sf"/>
</dbReference>
<dbReference type="InterPro" id="IPR027545">
    <property type="entry name" value="Kynurenine_monooxygenase"/>
</dbReference>
<dbReference type="PANTHER" id="PTHR46028">
    <property type="entry name" value="KYNURENINE 3-MONOOXYGENASE"/>
    <property type="match status" value="1"/>
</dbReference>
<dbReference type="PANTHER" id="PTHR46028:SF2">
    <property type="entry name" value="KYNURENINE 3-MONOOXYGENASE"/>
    <property type="match status" value="1"/>
</dbReference>
<dbReference type="Pfam" id="PF01494">
    <property type="entry name" value="FAD_binding_3"/>
    <property type="match status" value="1"/>
</dbReference>
<dbReference type="PRINTS" id="PR00420">
    <property type="entry name" value="RNGMNOXGNASE"/>
</dbReference>
<dbReference type="SUPFAM" id="SSF51905">
    <property type="entry name" value="FAD/NAD(P)-binding domain"/>
    <property type="match status" value="1"/>
</dbReference>
<protein>
    <recommendedName>
        <fullName evidence="3">Kynurenine 3-monooxygenase</fullName>
        <ecNumber evidence="3">1.14.13.9</ecNumber>
    </recommendedName>
    <alternativeName>
        <fullName evidence="3">Kynurenine 3-hydroxylase</fullName>
    </alternativeName>
</protein>
<name>KMO_RAT</name>
<feature type="chain" id="PRO_0000229745" description="Kynurenine 3-monooxygenase" evidence="7">
    <location>
        <begin position="1"/>
        <end position="478"/>
    </location>
</feature>
<feature type="transmembrane region" description="Helical" evidence="3">
    <location>
        <begin position="385"/>
        <end position="404"/>
    </location>
</feature>
<feature type="transmembrane region" description="Helical" evidence="3">
    <location>
        <begin position="425"/>
        <end position="445"/>
    </location>
</feature>
<feature type="binding site" evidence="1">
    <location>
        <position position="19"/>
    </location>
    <ligand>
        <name>FAD</name>
        <dbReference type="ChEBI" id="CHEBI:57692"/>
    </ligand>
</feature>
<feature type="binding site" evidence="1">
    <location>
        <begin position="37"/>
        <end position="40"/>
    </location>
    <ligand>
        <name>FAD</name>
        <dbReference type="ChEBI" id="CHEBI:57692"/>
    </ligand>
</feature>
<feature type="binding site" evidence="1">
    <location>
        <position position="57"/>
    </location>
    <ligand>
        <name>FAD</name>
        <dbReference type="ChEBI" id="CHEBI:57692"/>
    </ligand>
</feature>
<feature type="binding site" evidence="2">
    <location>
        <position position="85"/>
    </location>
    <ligand>
        <name>L-kynurenine</name>
        <dbReference type="ChEBI" id="CHEBI:57959"/>
    </ligand>
</feature>
<feature type="binding site" evidence="2">
    <location>
        <position position="99"/>
    </location>
    <ligand>
        <name>L-kynurenine</name>
        <dbReference type="ChEBI" id="CHEBI:57959"/>
    </ligand>
</feature>
<feature type="binding site" evidence="1">
    <location>
        <position position="111"/>
    </location>
    <ligand>
        <name>FAD</name>
        <dbReference type="ChEBI" id="CHEBI:57692"/>
    </ligand>
</feature>
<feature type="binding site" evidence="1">
    <location>
        <position position="136"/>
    </location>
    <ligand>
        <name>FAD</name>
        <dbReference type="ChEBI" id="CHEBI:57692"/>
    </ligand>
</feature>
<feature type="binding site" evidence="1">
    <location>
        <position position="172"/>
    </location>
    <ligand>
        <name>FAD</name>
        <dbReference type="ChEBI" id="CHEBI:57692"/>
    </ligand>
</feature>
<feature type="binding site" evidence="1">
    <location>
        <position position="304"/>
    </location>
    <ligand>
        <name>FAD</name>
        <dbReference type="ChEBI" id="CHEBI:57692"/>
    </ligand>
</feature>
<feature type="binding site" evidence="1">
    <location>
        <begin position="317"/>
        <end position="318"/>
    </location>
    <ligand>
        <name>FAD</name>
        <dbReference type="ChEBI" id="CHEBI:57692"/>
    </ligand>
</feature>
<feature type="binding site" evidence="2">
    <location>
        <position position="363"/>
    </location>
    <ligand>
        <name>L-kynurenine</name>
        <dbReference type="ChEBI" id="CHEBI:57959"/>
    </ligand>
</feature>
<feature type="binding site" evidence="2">
    <location>
        <position position="398"/>
    </location>
    <ligand>
        <name>L-kynurenine</name>
        <dbReference type="ChEBI" id="CHEBI:57959"/>
    </ligand>
</feature>
<feature type="strand" evidence="10">
    <location>
        <begin position="10"/>
        <end position="14"/>
    </location>
</feature>
<feature type="helix" evidence="10">
    <location>
        <begin position="18"/>
        <end position="28"/>
    </location>
</feature>
<feature type="turn" evidence="10">
    <location>
        <begin position="29"/>
        <end position="31"/>
    </location>
</feature>
<feature type="strand" evidence="10">
    <location>
        <begin position="33"/>
        <end position="40"/>
    </location>
</feature>
<feature type="turn" evidence="10">
    <location>
        <begin position="43"/>
        <end position="45"/>
    </location>
</feature>
<feature type="strand" evidence="10">
    <location>
        <begin position="54"/>
        <end position="58"/>
    </location>
</feature>
<feature type="helix" evidence="10">
    <location>
        <begin position="60"/>
        <end position="67"/>
    </location>
</feature>
<feature type="turn" evidence="10">
    <location>
        <begin position="68"/>
        <end position="70"/>
    </location>
</feature>
<feature type="helix" evidence="10">
    <location>
        <begin position="72"/>
        <end position="77"/>
    </location>
</feature>
<feature type="strand" evidence="10">
    <location>
        <begin position="79"/>
        <end position="82"/>
    </location>
</feature>
<feature type="strand" evidence="10">
    <location>
        <begin position="84"/>
        <end position="88"/>
    </location>
</feature>
<feature type="strand" evidence="10">
    <location>
        <begin position="94"/>
        <end position="98"/>
    </location>
</feature>
<feature type="strand" evidence="10">
    <location>
        <begin position="106"/>
        <end position="110"/>
    </location>
</feature>
<feature type="helix" evidence="10">
    <location>
        <begin position="111"/>
        <end position="124"/>
    </location>
</feature>
<feature type="strand" evidence="10">
    <location>
        <begin position="128"/>
        <end position="132"/>
    </location>
</feature>
<feature type="strand" evidence="11">
    <location>
        <begin position="150"/>
        <end position="153"/>
    </location>
</feature>
<feature type="strand" evidence="10">
    <location>
        <begin position="161"/>
        <end position="165"/>
    </location>
</feature>
<feature type="helix" evidence="10">
    <location>
        <begin position="172"/>
        <end position="177"/>
    </location>
</feature>
<feature type="strand" evidence="10">
    <location>
        <begin position="184"/>
        <end position="199"/>
    </location>
</feature>
<feature type="strand" evidence="10">
    <location>
        <begin position="205"/>
        <end position="208"/>
    </location>
</feature>
<feature type="strand" evidence="10">
    <location>
        <begin position="210"/>
        <end position="217"/>
    </location>
</feature>
<feature type="strand" evidence="10">
    <location>
        <begin position="219"/>
        <end position="227"/>
    </location>
</feature>
<feature type="strand" evidence="10">
    <location>
        <begin position="229"/>
        <end position="231"/>
    </location>
</feature>
<feature type="strand" evidence="10">
    <location>
        <begin position="233"/>
        <end position="240"/>
    </location>
</feature>
<feature type="helix" evidence="10">
    <location>
        <begin position="241"/>
        <end position="246"/>
    </location>
</feature>
<feature type="helix" evidence="10">
    <location>
        <begin position="250"/>
        <end position="260"/>
    </location>
</feature>
<feature type="helix" evidence="10">
    <location>
        <begin position="264"/>
        <end position="267"/>
    </location>
</feature>
<feature type="helix" evidence="10">
    <location>
        <begin position="272"/>
        <end position="277"/>
    </location>
</feature>
<feature type="strand" evidence="10">
    <location>
        <begin position="283"/>
        <end position="291"/>
    </location>
</feature>
<feature type="turn" evidence="10">
    <location>
        <begin position="296"/>
        <end position="298"/>
    </location>
</feature>
<feature type="strand" evidence="10">
    <location>
        <begin position="299"/>
        <end position="301"/>
    </location>
</feature>
<feature type="helix" evidence="10">
    <location>
        <begin position="303"/>
        <end position="305"/>
    </location>
</feature>
<feature type="strand" evidence="10">
    <location>
        <begin position="311"/>
        <end position="314"/>
    </location>
</feature>
<feature type="helix" evidence="10">
    <location>
        <begin position="316"/>
        <end position="333"/>
    </location>
</feature>
<feature type="turn" evidence="10">
    <location>
        <begin position="334"/>
        <end position="336"/>
    </location>
</feature>
<feature type="helix" evidence="10">
    <location>
        <begin position="338"/>
        <end position="369"/>
    </location>
</feature>
<feature type="helix" evidence="10">
    <location>
        <begin position="373"/>
        <end position="389"/>
    </location>
</feature>
<feature type="turn" evidence="10">
    <location>
        <begin position="391"/>
        <end position="393"/>
    </location>
</feature>
<feature type="helix" evidence="10">
    <location>
        <begin position="397"/>
        <end position="402"/>
    </location>
</feature>
<feature type="helix" evidence="10">
    <location>
        <begin position="408"/>
        <end position="442"/>
    </location>
</feature>
<keyword id="KW-0002">3D-structure</keyword>
<keyword id="KW-0274">FAD</keyword>
<keyword id="KW-0285">Flavoprotein</keyword>
<keyword id="KW-0472">Membrane</keyword>
<keyword id="KW-0496">Mitochondrion</keyword>
<keyword id="KW-1000">Mitochondrion outer membrane</keyword>
<keyword id="KW-0503">Monooxygenase</keyword>
<keyword id="KW-0521">NADP</keyword>
<keyword id="KW-0560">Oxidoreductase</keyword>
<keyword id="KW-0662">Pyridine nucleotide biosynthesis</keyword>
<keyword id="KW-1185">Reference proteome</keyword>
<keyword id="KW-0812">Transmembrane</keyword>
<keyword id="KW-1133">Transmembrane helix</keyword>
<comment type="function">
    <text evidence="3 5 6">Catalyzes the hydroxylation of L-kynurenine (L-Kyn) to form 3-hydroxy-L-kynurenine (L-3OHKyn). Required for synthesis of quinolinic acid, a neurotoxic NMDA receptor antagonist and potential endogenous inhibitor of NMDA receptor signaling in axonal targeting, synaptogenesis and apoptosis during brain development. Quinolinic acid may also affect NMDA receptor signaling in pancreatic beta cells, osteoblasts, myocardial cells, and the gastrointestinal tract.</text>
</comment>
<comment type="catalytic activity">
    <reaction evidence="3 4">
        <text>L-kynurenine + NADPH + O2 + H(+) = 3-hydroxy-L-kynurenine + NADP(+) + H2O</text>
        <dbReference type="Rhea" id="RHEA:20545"/>
        <dbReference type="ChEBI" id="CHEBI:15377"/>
        <dbReference type="ChEBI" id="CHEBI:15378"/>
        <dbReference type="ChEBI" id="CHEBI:15379"/>
        <dbReference type="ChEBI" id="CHEBI:57783"/>
        <dbReference type="ChEBI" id="CHEBI:57959"/>
        <dbReference type="ChEBI" id="CHEBI:58125"/>
        <dbReference type="ChEBI" id="CHEBI:58349"/>
        <dbReference type="EC" id="1.14.13.9"/>
    </reaction>
</comment>
<comment type="cofactor">
    <cofactor evidence="1 3">
        <name>FAD</name>
        <dbReference type="ChEBI" id="CHEBI:57692"/>
    </cofactor>
</comment>
<comment type="biophysicochemical properties">
    <kinetics>
        <KM evidence="5">258 uM for L-kynurenine</KM>
        <KM evidence="4">11.3 uM for NADPH</KM>
        <KM evidence="4">316 uM for NADH</KM>
    </kinetics>
</comment>
<comment type="pathway">
    <text evidence="3">Cofactor biosynthesis; NAD(+) biosynthesis; quinolinate from L-kynurenine: step 1/3.</text>
</comment>
<comment type="subcellular location">
    <subcellularLocation>
        <location evidence="3 4">Mitochondrion outer membrane</location>
        <topology evidence="3 4">Multi-pass membrane protein</topology>
    </subcellularLocation>
</comment>
<comment type="tissue specificity">
    <text evidence="4">Highest activity in liver and kidney. Low activity in spleen, stomach, intestinal tract, esophagus, heart and lung.</text>
</comment>
<comment type="domain">
    <text evidence="1">Transmembrane domains are required for enzymatic activity.</text>
</comment>
<comment type="miscellaneous">
    <text>Increased in neuroinflammatory conditions. Inhibitors are investigated as potential neuroprotective drugs since they lead to an increased level of kynurenic acid, a neuroprotective NMDA receptor agonist.</text>
</comment>
<comment type="similarity">
    <text evidence="3">Belongs to the aromatic-ring hydroxylase family. KMO subfamily.</text>
</comment>
<evidence type="ECO:0000250" key="1">
    <source>
        <dbReference type="UniProtKB" id="O15229"/>
    </source>
</evidence>
<evidence type="ECO:0000250" key="2">
    <source>
        <dbReference type="UniProtKB" id="Q84HF5"/>
    </source>
</evidence>
<evidence type="ECO:0000255" key="3">
    <source>
        <dbReference type="HAMAP-Rule" id="MF_03018"/>
    </source>
</evidence>
<evidence type="ECO:0000269" key="4">
    <source>
    </source>
</evidence>
<evidence type="ECO:0000269" key="5">
    <source>
    </source>
</evidence>
<evidence type="ECO:0000269" key="6">
    <source>
    </source>
</evidence>
<evidence type="ECO:0000305" key="7"/>
<evidence type="ECO:0000312" key="8">
    <source>
        <dbReference type="EMBL" id="AAC62614.1"/>
    </source>
</evidence>
<evidence type="ECO:0000312" key="9">
    <source>
        <dbReference type="RGD" id="620610"/>
    </source>
</evidence>
<evidence type="ECO:0007829" key="10">
    <source>
        <dbReference type="PDB" id="6LKD"/>
    </source>
</evidence>
<evidence type="ECO:0007829" key="11">
    <source>
        <dbReference type="PDB" id="6LKE"/>
    </source>
</evidence>